<sequence>MANKNNVTELIFTGLFQDPEVQKVCFVLFLPVYLATLLGNSLILVAVSISKTLHSPMYFFLSSLSLVEICYSSTIVPKFITDLLAKVKTISLKGCLTQIFFSHFFGVVEVILLVVMAYDRYVAICKPLHYMNIMSRQVCHMLVAGSWLGGFIHSIIQIIITIPLPFCGPNVIDHYFCDLQQLFKLACTDTFMEGFIVMANSGLISIVSLFILVSSYAVILISLRKRSAEGRRKALSTCASHITVVILFFVPGAFIYMRPSSTFTEDKLVSVFYTVITPMLNPIVYTLRNTEMKNAIRMSWKQKDS</sequence>
<comment type="function">
    <text evidence="3">Odorant receptor.</text>
</comment>
<comment type="subcellular location">
    <subcellularLocation>
        <location evidence="3">Cell membrane</location>
        <topology evidence="1">Multi-pass membrane protein</topology>
    </subcellularLocation>
</comment>
<comment type="similarity">
    <text evidence="2">Belongs to the G-protein coupled receptor 1 family.</text>
</comment>
<organism>
    <name type="scientific">Mus musculus</name>
    <name type="common">Mouse</name>
    <dbReference type="NCBI Taxonomy" id="10090"/>
    <lineage>
        <taxon>Eukaryota</taxon>
        <taxon>Metazoa</taxon>
        <taxon>Chordata</taxon>
        <taxon>Craniata</taxon>
        <taxon>Vertebrata</taxon>
        <taxon>Euteleostomi</taxon>
        <taxon>Mammalia</taxon>
        <taxon>Eutheria</taxon>
        <taxon>Euarchontoglires</taxon>
        <taxon>Glires</taxon>
        <taxon>Rodentia</taxon>
        <taxon>Myomorpha</taxon>
        <taxon>Muroidea</taxon>
        <taxon>Muridae</taxon>
        <taxon>Murinae</taxon>
        <taxon>Mus</taxon>
        <taxon>Mus</taxon>
    </lineage>
</organism>
<keyword id="KW-1003">Cell membrane</keyword>
<keyword id="KW-1015">Disulfide bond</keyword>
<keyword id="KW-0297">G-protein coupled receptor</keyword>
<keyword id="KW-0325">Glycoprotein</keyword>
<keyword id="KW-0472">Membrane</keyword>
<keyword id="KW-0552">Olfaction</keyword>
<keyword id="KW-0675">Receptor</keyword>
<keyword id="KW-1185">Reference proteome</keyword>
<keyword id="KW-0716">Sensory transduction</keyword>
<keyword id="KW-0807">Transducer</keyword>
<keyword id="KW-0812">Transmembrane</keyword>
<keyword id="KW-1133">Transmembrane helix</keyword>
<feature type="chain" id="PRO_0000150819" description="Olfactory receptor 4B13">
    <location>
        <begin position="1"/>
        <end position="305"/>
    </location>
</feature>
<feature type="topological domain" description="Extracellular" evidence="1">
    <location>
        <begin position="1"/>
        <end position="25"/>
    </location>
</feature>
<feature type="transmembrane region" description="Helical; Name=1" evidence="1">
    <location>
        <begin position="26"/>
        <end position="46"/>
    </location>
</feature>
<feature type="topological domain" description="Cytoplasmic" evidence="1">
    <location>
        <begin position="47"/>
        <end position="55"/>
    </location>
</feature>
<feature type="transmembrane region" description="Helical; Name=2" evidence="1">
    <location>
        <begin position="56"/>
        <end position="76"/>
    </location>
</feature>
<feature type="topological domain" description="Extracellular" evidence="1">
    <location>
        <begin position="77"/>
        <end position="95"/>
    </location>
</feature>
<feature type="transmembrane region" description="Helical; Name=3" evidence="1">
    <location>
        <begin position="96"/>
        <end position="116"/>
    </location>
</feature>
<feature type="topological domain" description="Cytoplasmic" evidence="1">
    <location>
        <begin position="117"/>
        <end position="141"/>
    </location>
</feature>
<feature type="transmembrane region" description="Helical; Name=4" evidence="1">
    <location>
        <begin position="142"/>
        <end position="162"/>
    </location>
</feature>
<feature type="topological domain" description="Extracellular" evidence="1">
    <location>
        <begin position="163"/>
        <end position="202"/>
    </location>
</feature>
<feature type="transmembrane region" description="Helical; Name=5" evidence="1">
    <location>
        <begin position="203"/>
        <end position="223"/>
    </location>
</feature>
<feature type="topological domain" description="Cytoplasmic" evidence="1">
    <location>
        <begin position="224"/>
        <end position="236"/>
    </location>
</feature>
<feature type="transmembrane region" description="Helical; Name=6" evidence="1">
    <location>
        <begin position="237"/>
        <end position="257"/>
    </location>
</feature>
<feature type="topological domain" description="Extracellular" evidence="1">
    <location>
        <begin position="258"/>
        <end position="266"/>
    </location>
</feature>
<feature type="transmembrane region" description="Helical; Name=7" evidence="1">
    <location>
        <begin position="267"/>
        <end position="287"/>
    </location>
</feature>
<feature type="topological domain" description="Cytoplasmic" evidence="1">
    <location>
        <begin position="288"/>
        <end position="305"/>
    </location>
</feature>
<feature type="glycosylation site" description="N-linked (GlcNAc...) asparagine" evidence="1">
    <location>
        <position position="6"/>
    </location>
</feature>
<feature type="disulfide bond" evidence="2">
    <location>
        <begin position="95"/>
        <end position="187"/>
    </location>
</feature>
<evidence type="ECO:0000255" key="1"/>
<evidence type="ECO:0000255" key="2">
    <source>
        <dbReference type="PROSITE-ProRule" id="PRU00521"/>
    </source>
</evidence>
<evidence type="ECO:0000305" key="3"/>
<evidence type="ECO:0000312" key="4">
    <source>
        <dbReference type="MGI" id="MGI:2177525"/>
    </source>
</evidence>
<dbReference type="EMBL" id="AY073104">
    <property type="protein sequence ID" value="AAL60767.1"/>
    <property type="molecule type" value="Genomic_DNA"/>
</dbReference>
<dbReference type="EMBL" id="AY318475">
    <property type="protein sequence ID" value="AAP71664.1"/>
    <property type="molecule type" value="Genomic_DNA"/>
</dbReference>
<dbReference type="EMBL" id="U28770">
    <property type="protein sequence ID" value="AAC52393.1"/>
    <property type="molecule type" value="Genomic_DNA"/>
</dbReference>
<dbReference type="CCDS" id="CCDS16410.1"/>
<dbReference type="RefSeq" id="NP_667195.1">
    <property type="nucleotide sequence ID" value="NM_146984.1"/>
</dbReference>
<dbReference type="SMR" id="Q60881"/>
<dbReference type="FunCoup" id="Q60881">
    <property type="interactions" value="1184"/>
</dbReference>
<dbReference type="STRING" id="10090.ENSMUSP00000150216"/>
<dbReference type="GlyCosmos" id="Q60881">
    <property type="glycosylation" value="1 site, No reported glycans"/>
</dbReference>
<dbReference type="GlyGen" id="Q60881">
    <property type="glycosylation" value="1 site"/>
</dbReference>
<dbReference type="iPTMnet" id="Q60881"/>
<dbReference type="PhosphoSitePlus" id="Q60881"/>
<dbReference type="PaxDb" id="10090-ENSMUSP00000097341"/>
<dbReference type="DNASU" id="406186"/>
<dbReference type="Ensembl" id="ENSMUST00000099752.2">
    <property type="protein sequence ID" value="ENSMUSP00000097341.2"/>
    <property type="gene ID" value="ENSMUSG00000075063.3"/>
</dbReference>
<dbReference type="Ensembl" id="ENSMUST00000213968.2">
    <property type="protein sequence ID" value="ENSMUSP00000150216.2"/>
    <property type="gene ID" value="ENSMUSG00000075063.3"/>
</dbReference>
<dbReference type="GeneID" id="406186"/>
<dbReference type="KEGG" id="mmu:406186"/>
<dbReference type="UCSC" id="uc008ksp.1">
    <property type="organism name" value="mouse"/>
</dbReference>
<dbReference type="AGR" id="MGI:2177525"/>
<dbReference type="CTD" id="406186"/>
<dbReference type="MGI" id="MGI:2177525">
    <property type="gene designation" value="Or4b13"/>
</dbReference>
<dbReference type="VEuPathDB" id="HostDB:ENSMUSG00000075063"/>
<dbReference type="eggNOG" id="ENOG502QVH7">
    <property type="taxonomic scope" value="Eukaryota"/>
</dbReference>
<dbReference type="GeneTree" id="ENSGT00940000155395"/>
<dbReference type="HOGENOM" id="CLU_012526_5_5_1"/>
<dbReference type="InParanoid" id="Q60881"/>
<dbReference type="OMA" id="MSRTACH"/>
<dbReference type="OrthoDB" id="10017003at2759"/>
<dbReference type="PhylomeDB" id="Q60881"/>
<dbReference type="TreeFam" id="TF337251"/>
<dbReference type="BioGRID-ORCS" id="406186">
    <property type="hits" value="0 hits in 70 CRISPR screens"/>
</dbReference>
<dbReference type="PRO" id="PR:Q60881"/>
<dbReference type="Proteomes" id="UP000000589">
    <property type="component" value="Chromosome 2"/>
</dbReference>
<dbReference type="RNAct" id="Q60881">
    <property type="molecule type" value="protein"/>
</dbReference>
<dbReference type="Bgee" id="ENSMUSG00000075063">
    <property type="expression patterns" value="Expressed in respiratory tract epithelium and 4 other cell types or tissues"/>
</dbReference>
<dbReference type="GO" id="GO:0016020">
    <property type="term" value="C:membrane"/>
    <property type="evidence" value="ECO:0000247"/>
    <property type="project" value="MGI"/>
</dbReference>
<dbReference type="GO" id="GO:0005886">
    <property type="term" value="C:plasma membrane"/>
    <property type="evidence" value="ECO:0007669"/>
    <property type="project" value="UniProtKB-SubCell"/>
</dbReference>
<dbReference type="GO" id="GO:0004930">
    <property type="term" value="F:G protein-coupled receptor activity"/>
    <property type="evidence" value="ECO:0007669"/>
    <property type="project" value="UniProtKB-KW"/>
</dbReference>
<dbReference type="GO" id="GO:0004984">
    <property type="term" value="F:olfactory receptor activity"/>
    <property type="evidence" value="ECO:0000247"/>
    <property type="project" value="MGI"/>
</dbReference>
<dbReference type="GO" id="GO:0007186">
    <property type="term" value="P:G protein-coupled receptor signaling pathway"/>
    <property type="evidence" value="ECO:0000247"/>
    <property type="project" value="MGI"/>
</dbReference>
<dbReference type="GO" id="GO:0007608">
    <property type="term" value="P:sensory perception of smell"/>
    <property type="evidence" value="ECO:0000247"/>
    <property type="project" value="MGI"/>
</dbReference>
<dbReference type="CDD" id="cd15939">
    <property type="entry name" value="7tmA_OR4A-like"/>
    <property type="match status" value="1"/>
</dbReference>
<dbReference type="FunFam" id="1.20.1070.10:FF:000007">
    <property type="entry name" value="Olfactory receptor"/>
    <property type="match status" value="1"/>
</dbReference>
<dbReference type="Gene3D" id="1.20.1070.10">
    <property type="entry name" value="Rhodopsin 7-helix transmembrane proteins"/>
    <property type="match status" value="1"/>
</dbReference>
<dbReference type="InterPro" id="IPR000276">
    <property type="entry name" value="GPCR_Rhodpsn"/>
</dbReference>
<dbReference type="InterPro" id="IPR017452">
    <property type="entry name" value="GPCR_Rhodpsn_7TM"/>
</dbReference>
<dbReference type="InterPro" id="IPR000725">
    <property type="entry name" value="Olfact_rcpt"/>
</dbReference>
<dbReference type="InterPro" id="IPR050427">
    <property type="entry name" value="Olfactory_Receptors"/>
</dbReference>
<dbReference type="PANTHER" id="PTHR48002">
    <property type="entry name" value="OLFACTORY RECEPTOR"/>
    <property type="match status" value="1"/>
</dbReference>
<dbReference type="Pfam" id="PF13853">
    <property type="entry name" value="7tm_4"/>
    <property type="match status" value="1"/>
</dbReference>
<dbReference type="PRINTS" id="PR00237">
    <property type="entry name" value="GPCRRHODOPSN"/>
</dbReference>
<dbReference type="PRINTS" id="PR00245">
    <property type="entry name" value="OLFACTORYR"/>
</dbReference>
<dbReference type="SUPFAM" id="SSF81321">
    <property type="entry name" value="Family A G protein-coupled receptor-like"/>
    <property type="match status" value="1"/>
</dbReference>
<dbReference type="PROSITE" id="PS00237">
    <property type="entry name" value="G_PROTEIN_RECEP_F1_1"/>
    <property type="match status" value="1"/>
</dbReference>
<dbReference type="PROSITE" id="PS50262">
    <property type="entry name" value="G_PROTEIN_RECEP_F1_2"/>
    <property type="match status" value="1"/>
</dbReference>
<protein>
    <recommendedName>
        <fullName evidence="3">Olfactory receptor 4B13</fullName>
    </recommendedName>
    <alternativeName>
        <fullName>Olfactory receptor 142</fullName>
    </alternativeName>
    <alternativeName>
        <fullName>Olfactory receptor 227-2</fullName>
    </alternativeName>
    <alternativeName>
        <fullName>Olfactory receptor 4C</fullName>
    </alternativeName>
</protein>
<gene>
    <name evidence="4" type="primary">Or4b13</name>
    <name evidence="4" type="synonym">Mor227-2</name>
    <name evidence="4" type="synonym">Olfr142</name>
    <name type="synonym">Olfr4</name>
</gene>
<proteinExistence type="inferred from homology"/>
<reference key="1">
    <citation type="journal article" date="2002" name="Nat. Neurosci.">
        <title>The olfactory receptor gene superfamily of the mouse.</title>
        <authorList>
            <person name="Zhang X."/>
            <person name="Firestein S."/>
        </authorList>
    </citation>
    <scope>NUCLEOTIDE SEQUENCE [GENOMIC DNA]</scope>
</reference>
<reference key="2">
    <citation type="journal article" date="2002" name="Hum. Mol. Genet.">
        <title>Different evolutionary processes shaped the mouse and human olfactory receptor gene families.</title>
        <authorList>
            <person name="Young J.M."/>
            <person name="Friedman C."/>
            <person name="Williams E.M."/>
            <person name="Ross J.A."/>
            <person name="Tonnes-Priddy L."/>
            <person name="Trask B.J."/>
        </authorList>
    </citation>
    <scope>NUCLEOTIDE SEQUENCE [GENOMIC DNA]</scope>
</reference>
<reference key="3">
    <citation type="journal article" date="2002" name="Hum. Mol. Genet.">
        <authorList>
            <person name="Young J.M."/>
            <person name="Friedman C."/>
            <person name="Williams E.M."/>
            <person name="Ross J.A."/>
            <person name="Tonnes-Priddy L."/>
            <person name="Trask B.J."/>
        </authorList>
    </citation>
    <scope>ERRATUM OF PUBMED:11875048</scope>
</reference>
<reference key="4">
    <citation type="journal article" date="1996" name="Proc. Natl. Acad. Sci. U.S.A.">
        <title>The chromosomal distribution of mouse odorant receptor genes.</title>
        <authorList>
            <person name="Sullivan S.L."/>
            <person name="Adamson M.C."/>
            <person name="Ressler K.J."/>
            <person name="Kozak C.A."/>
            <person name="Buck L.B."/>
        </authorList>
    </citation>
    <scope>NUCLEOTIDE SEQUENCE [GENOMIC DNA] OF 126-236</scope>
    <source>
        <strain>C57BL/6J</strain>
    </source>
</reference>
<name>O4B13_MOUSE</name>
<accession>Q60881</accession>
<accession>Q8VGP2</accession>